<gene>
    <name type="ordered locus">RBAM_014500</name>
</gene>
<reference key="1">
    <citation type="journal article" date="2007" name="Nat. Biotechnol.">
        <title>Comparative analysis of the complete genome sequence of the plant growth-promoting bacterium Bacillus amyloliquefaciens FZB42.</title>
        <authorList>
            <person name="Chen X.H."/>
            <person name="Koumoutsi A."/>
            <person name="Scholz R."/>
            <person name="Eisenreich A."/>
            <person name="Schneider K."/>
            <person name="Heinemeyer I."/>
            <person name="Morgenstern B."/>
            <person name="Voss B."/>
            <person name="Hess W.R."/>
            <person name="Reva O."/>
            <person name="Junge H."/>
            <person name="Voigt B."/>
            <person name="Jungblut P.R."/>
            <person name="Vater J."/>
            <person name="Suessmuth R."/>
            <person name="Liesegang H."/>
            <person name="Strittmatter A."/>
            <person name="Gottschalk G."/>
            <person name="Borriss R."/>
        </authorList>
    </citation>
    <scope>NUCLEOTIDE SEQUENCE [LARGE SCALE GENOMIC DNA]</scope>
    <source>
        <strain>DSM 23117 / BGSC 10A6 / LMG 26770 / FZB42</strain>
    </source>
</reference>
<sequence>MEYQYPMNEDWTTEEAVDVIAFFQQVENAYEKGADRDRLLNAYRRFKEIVPGKAEEKKICSQFEADSTYSPYRTVKQAKQSDQAIIKM</sequence>
<comment type="similarity">
    <text evidence="1">Belongs to the UPF0223 family.</text>
</comment>
<dbReference type="EMBL" id="CP000560">
    <property type="protein sequence ID" value="ABS73813.1"/>
    <property type="molecule type" value="Genomic_DNA"/>
</dbReference>
<dbReference type="RefSeq" id="WP_007409667.1">
    <property type="nucleotide sequence ID" value="NC_009725.2"/>
</dbReference>
<dbReference type="SMR" id="A7Z487"/>
<dbReference type="GeneID" id="93080584"/>
<dbReference type="KEGG" id="bay:RBAM_014500"/>
<dbReference type="HOGENOM" id="CLU_166693_0_0_9"/>
<dbReference type="Proteomes" id="UP000001120">
    <property type="component" value="Chromosome"/>
</dbReference>
<dbReference type="Gene3D" id="1.10.220.80">
    <property type="entry name" value="BH2638-like"/>
    <property type="match status" value="1"/>
</dbReference>
<dbReference type="HAMAP" id="MF_01041">
    <property type="entry name" value="UPF0223"/>
    <property type="match status" value="1"/>
</dbReference>
<dbReference type="InterPro" id="IPR023324">
    <property type="entry name" value="BH2638-like_sf"/>
</dbReference>
<dbReference type="InterPro" id="IPR007920">
    <property type="entry name" value="UPF0223"/>
</dbReference>
<dbReference type="NCBIfam" id="NF003353">
    <property type="entry name" value="PRK04387.1"/>
    <property type="match status" value="1"/>
</dbReference>
<dbReference type="Pfam" id="PF05256">
    <property type="entry name" value="UPF0223"/>
    <property type="match status" value="1"/>
</dbReference>
<dbReference type="PIRSF" id="PIRSF037260">
    <property type="entry name" value="UPF0223"/>
    <property type="match status" value="1"/>
</dbReference>
<dbReference type="SUPFAM" id="SSF158504">
    <property type="entry name" value="BH2638-like"/>
    <property type="match status" value="1"/>
</dbReference>
<feature type="chain" id="PRO_1000084338" description="UPF0223 protein RBAM_014500">
    <location>
        <begin position="1"/>
        <end position="88"/>
    </location>
</feature>
<proteinExistence type="inferred from homology"/>
<evidence type="ECO:0000255" key="1">
    <source>
        <dbReference type="HAMAP-Rule" id="MF_01041"/>
    </source>
</evidence>
<accession>A7Z487</accession>
<name>Y1450_BACVZ</name>
<organism>
    <name type="scientific">Bacillus velezensis (strain DSM 23117 / BGSC 10A6 / LMG 26770 / FZB42)</name>
    <name type="common">Bacillus amyloliquefaciens subsp. plantarum</name>
    <dbReference type="NCBI Taxonomy" id="326423"/>
    <lineage>
        <taxon>Bacteria</taxon>
        <taxon>Bacillati</taxon>
        <taxon>Bacillota</taxon>
        <taxon>Bacilli</taxon>
        <taxon>Bacillales</taxon>
        <taxon>Bacillaceae</taxon>
        <taxon>Bacillus</taxon>
        <taxon>Bacillus amyloliquefaciens group</taxon>
    </lineage>
</organism>
<protein>
    <recommendedName>
        <fullName evidence="1">UPF0223 protein RBAM_014500</fullName>
    </recommendedName>
</protein>